<proteinExistence type="evidence at transcript level"/>
<reference evidence="5 7" key="1">
    <citation type="journal article" date="2005" name="Physiol. Genomics">
        <title>Genomic organization, expression, and function of bitter taste receptors (T2R) in mouse and rat.</title>
        <authorList>
            <person name="Wu S.V."/>
            <person name="Chen M.C."/>
            <person name="Rozengurt E."/>
        </authorList>
    </citation>
    <scope>NUCLEOTIDE SEQUENCE [MRNA]</scope>
    <scope>TISSUE SPECIFICITY</scope>
    <source>
        <strain evidence="4">Sprague-Dawley</strain>
    </source>
</reference>
<reference evidence="6" key="2">
    <citation type="submission" date="2003-08" db="EMBL/GenBank/DDBJ databases">
        <title>Identification of new putative rat taste receptors belonging to the T2R family.</title>
        <authorList>
            <person name="Conte C."/>
            <person name="Ebeling M."/>
            <person name="Marcuz A."/>
            <person name="Andres-Barquin P.J."/>
        </authorList>
    </citation>
    <scope>NUCLEOTIDE SEQUENCE [GENOMIC DNA]</scope>
    <source>
        <strain evidence="6">Sprague-Dawley</strain>
    </source>
</reference>
<sequence length="304" mass="34811">MLWELYAFVFAASVVFNFVGIVANLFIIVIISKTWVKSHKISSSDKILFSLAITRFLTLGLFLLNTVYIATNTGRSVYFSTFFLLCWKFLDSNSLWLVTFLNCLYCVKITHFQHPVFLLLKRTVSMKTTSLLLACLLISAFTTLLYFVLTQISRFPEHIIGRNDTLFDVSDGILTLAASLILSSLLQFLLNVTFASLLIHSLRRHVQKMQRNRSSFWNPQTEAHVGAMRLMICFLVLYIPYSIAALLYFPSYMRKNLRAQAACMIITAAYPPGHSILLIITHHKLKAKAKKICCFYKLRDFVSN</sequence>
<organism>
    <name type="scientific">Rattus norvegicus</name>
    <name type="common">Rat</name>
    <dbReference type="NCBI Taxonomy" id="10116"/>
    <lineage>
        <taxon>Eukaryota</taxon>
        <taxon>Metazoa</taxon>
        <taxon>Chordata</taxon>
        <taxon>Craniata</taxon>
        <taxon>Vertebrata</taxon>
        <taxon>Euteleostomi</taxon>
        <taxon>Mammalia</taxon>
        <taxon>Eutheria</taxon>
        <taxon>Euarchontoglires</taxon>
        <taxon>Glires</taxon>
        <taxon>Rodentia</taxon>
        <taxon>Myomorpha</taxon>
        <taxon>Muroidea</taxon>
        <taxon>Muridae</taxon>
        <taxon>Murinae</taxon>
        <taxon>Rattus</taxon>
    </lineage>
</organism>
<accession>Q67ET0</accession>
<feature type="chain" id="PRO_0000248472" description="Taste receptor type 2 member 4">
    <location>
        <begin position="1"/>
        <end position="304"/>
    </location>
</feature>
<feature type="topological domain" description="Extracellular" evidence="3">
    <location>
        <begin position="1"/>
        <end position="10"/>
    </location>
</feature>
<feature type="transmembrane region" description="Helical; Name=1" evidence="3">
    <location>
        <begin position="11"/>
        <end position="31"/>
    </location>
</feature>
<feature type="topological domain" description="Cytoplasmic" evidence="3">
    <location>
        <begin position="32"/>
        <end position="46"/>
    </location>
</feature>
<feature type="transmembrane region" description="Helical; Name=2" evidence="3">
    <location>
        <begin position="47"/>
        <end position="67"/>
    </location>
</feature>
<feature type="topological domain" description="Extracellular" evidence="3">
    <location>
        <begin position="68"/>
        <end position="80"/>
    </location>
</feature>
<feature type="transmembrane region" description="Helical; Name=3" evidence="3">
    <location>
        <begin position="81"/>
        <end position="101"/>
    </location>
</feature>
<feature type="topological domain" description="Cytoplasmic" evidence="3">
    <location>
        <begin position="102"/>
        <end position="128"/>
    </location>
</feature>
<feature type="transmembrane region" description="Helical; Name=4" evidence="3">
    <location>
        <begin position="129"/>
        <end position="149"/>
    </location>
</feature>
<feature type="topological domain" description="Extracellular" evidence="3">
    <location>
        <begin position="150"/>
        <end position="171"/>
    </location>
</feature>
<feature type="transmembrane region" description="Helical; Name=5" evidence="3">
    <location>
        <begin position="172"/>
        <end position="192"/>
    </location>
</feature>
<feature type="topological domain" description="Cytoplasmic" evidence="3">
    <location>
        <begin position="193"/>
        <end position="229"/>
    </location>
</feature>
<feature type="transmembrane region" description="Helical; Name=6" evidence="3">
    <location>
        <begin position="230"/>
        <end position="250"/>
    </location>
</feature>
<feature type="topological domain" description="Extracellular" evidence="3">
    <location>
        <begin position="251"/>
        <end position="260"/>
    </location>
</feature>
<feature type="transmembrane region" description="Helical; Name=7" evidence="3">
    <location>
        <begin position="261"/>
        <end position="281"/>
    </location>
</feature>
<feature type="topological domain" description="Cytoplasmic" evidence="3">
    <location>
        <begin position="282"/>
        <end position="304"/>
    </location>
</feature>
<feature type="glycosylation site" description="N-linked (GlcNAc...) asparagine" evidence="3">
    <location>
        <position position="163"/>
    </location>
</feature>
<protein>
    <recommendedName>
        <fullName>Taste receptor type 2 member 4</fullName>
        <shortName>T2R4</shortName>
    </recommendedName>
    <alternativeName>
        <fullName>T2R16</fullName>
    </alternativeName>
    <alternativeName>
        <fullName evidence="8">Taste receptor type 2 member 108</fullName>
    </alternativeName>
    <alternativeName>
        <fullName>Taste receptor type 2 member 20</fullName>
        <shortName>T2R20</shortName>
    </alternativeName>
</protein>
<comment type="function">
    <text evidence="1">Gustducin-coupled receptor implicated in the perception of bitter compounds in the oral cavity and the gastrointestinal tract. Signals through PLCB2 and the calcium-regulated cation channel TRPM5 (By similarity). In airway epithelial cells, binding of denatonium increases the intracellular calcium ion concentration and stimulates ciliary beat frequency (By similarity).</text>
</comment>
<comment type="subcellular location">
    <subcellularLocation>
        <location evidence="5">Membrane</location>
        <topology evidence="5">Multi-pass membrane protein</topology>
    </subcellularLocation>
    <subcellularLocation>
        <location>Cell projection</location>
        <location>Cilium membrane</location>
    </subcellularLocation>
    <text evidence="1">In airway epithelial cells, localizes to motile cilia.</text>
</comment>
<comment type="tissue specificity">
    <text evidence="4">Expressed in tongue, stomach and duodenum.</text>
</comment>
<comment type="miscellaneous">
    <text evidence="5">Several bitter taste receptors are expressed in a single taste receptor cell.</text>
</comment>
<comment type="similarity">
    <text evidence="3">Belongs to the G-protein coupled receptor T2R family.</text>
</comment>
<gene>
    <name evidence="2" type="primary">Tas2r4</name>
    <name evidence="8" type="synonym">T2r16</name>
    <name type="synonym">T2r20</name>
    <name evidence="8" type="synonym">Tas2r108</name>
</gene>
<name>TA2R4_RAT</name>
<dbReference type="EMBL" id="AY916510">
    <property type="protein sequence ID" value="AAX99133.1"/>
    <property type="molecule type" value="mRNA"/>
</dbReference>
<dbReference type="EMBL" id="AY362740">
    <property type="protein sequence ID" value="AAR13349.1"/>
    <property type="molecule type" value="Genomic_DNA"/>
</dbReference>
<dbReference type="RefSeq" id="NP_001019857.1">
    <property type="nucleotide sequence ID" value="NM_001024686.1"/>
</dbReference>
<dbReference type="SMR" id="Q67ET0"/>
<dbReference type="FunCoup" id="Q67ET0">
    <property type="interactions" value="89"/>
</dbReference>
<dbReference type="STRING" id="10116.ENSRNOP00000016232"/>
<dbReference type="GlyCosmos" id="Q67ET0">
    <property type="glycosylation" value="1 site, No reported glycans"/>
</dbReference>
<dbReference type="GlyGen" id="Q67ET0">
    <property type="glycosylation" value="1 site"/>
</dbReference>
<dbReference type="PaxDb" id="10116-ENSRNOP00000016232"/>
<dbReference type="Ensembl" id="ENSRNOT00000016232.3">
    <property type="protein sequence ID" value="ENSRNOP00000016232.2"/>
    <property type="gene ID" value="ENSRNOG00000012195.3"/>
</dbReference>
<dbReference type="GeneID" id="554302"/>
<dbReference type="KEGG" id="rno:554302"/>
<dbReference type="UCSC" id="RGD:1561194">
    <property type="organism name" value="rat"/>
</dbReference>
<dbReference type="AGR" id="RGD:1561194"/>
<dbReference type="CTD" id="57253"/>
<dbReference type="RGD" id="1561194">
    <property type="gene designation" value="Tas2r108"/>
</dbReference>
<dbReference type="eggNOG" id="ENOG502S2SI">
    <property type="taxonomic scope" value="Eukaryota"/>
</dbReference>
<dbReference type="GeneTree" id="ENSGT01100000263477"/>
<dbReference type="HOGENOM" id="CLU_072337_1_0_1"/>
<dbReference type="InParanoid" id="Q67ET0"/>
<dbReference type="OMA" id="MKLMIYF"/>
<dbReference type="OrthoDB" id="9449902at2759"/>
<dbReference type="PhylomeDB" id="Q67ET0"/>
<dbReference type="TreeFam" id="TF335891"/>
<dbReference type="Reactome" id="R-RNO-418594">
    <property type="pathway name" value="G alpha (i) signalling events"/>
</dbReference>
<dbReference type="Reactome" id="R-RNO-420499">
    <property type="pathway name" value="Class C/3 (Metabotropic glutamate/pheromone receptors)"/>
</dbReference>
<dbReference type="Reactome" id="R-RNO-9717207">
    <property type="pathway name" value="Sensory perception of sweet, bitter, and umami (glutamate) taste"/>
</dbReference>
<dbReference type="PRO" id="PR:Q67ET0"/>
<dbReference type="Proteomes" id="UP000002494">
    <property type="component" value="Chromosome 4"/>
</dbReference>
<dbReference type="Bgee" id="ENSRNOG00000012195">
    <property type="expression patterns" value="Expressed in cerebellum"/>
</dbReference>
<dbReference type="GO" id="GO:0060170">
    <property type="term" value="C:ciliary membrane"/>
    <property type="evidence" value="ECO:0007669"/>
    <property type="project" value="UniProtKB-SubCell"/>
</dbReference>
<dbReference type="GO" id="GO:0016020">
    <property type="term" value="C:membrane"/>
    <property type="evidence" value="ECO:0000318"/>
    <property type="project" value="GO_Central"/>
</dbReference>
<dbReference type="GO" id="GO:0033038">
    <property type="term" value="F:bitter taste receptor activity"/>
    <property type="evidence" value="ECO:0000266"/>
    <property type="project" value="RGD"/>
</dbReference>
<dbReference type="GO" id="GO:0004930">
    <property type="term" value="F:G protein-coupled receptor activity"/>
    <property type="evidence" value="ECO:0007669"/>
    <property type="project" value="UniProtKB-KW"/>
</dbReference>
<dbReference type="GO" id="GO:0001580">
    <property type="term" value="P:detection of chemical stimulus involved in sensory perception of bitter taste"/>
    <property type="evidence" value="ECO:0000266"/>
    <property type="project" value="RGD"/>
</dbReference>
<dbReference type="GO" id="GO:0007585">
    <property type="term" value="P:respiratory gaseous exchange by respiratory system"/>
    <property type="evidence" value="ECO:0000266"/>
    <property type="project" value="RGD"/>
</dbReference>
<dbReference type="CDD" id="cd15013">
    <property type="entry name" value="7tm_TAS2R4"/>
    <property type="match status" value="1"/>
</dbReference>
<dbReference type="FunFam" id="1.20.1070.10:FF:000055">
    <property type="entry name" value="Taste receptor type 2"/>
    <property type="match status" value="1"/>
</dbReference>
<dbReference type="Gene3D" id="1.20.1070.10">
    <property type="entry name" value="Rhodopsin 7-helix transmembrane proteins"/>
    <property type="match status" value="1"/>
</dbReference>
<dbReference type="InterPro" id="IPR007960">
    <property type="entry name" value="TAS2R"/>
</dbReference>
<dbReference type="InterPro" id="IPR030055">
    <property type="entry name" value="TAS2R4"/>
</dbReference>
<dbReference type="PANTHER" id="PTHR11394">
    <property type="entry name" value="TASTE RECEPTOR TYPE 2"/>
    <property type="match status" value="1"/>
</dbReference>
<dbReference type="PANTHER" id="PTHR11394:SF55">
    <property type="entry name" value="TASTE RECEPTOR TYPE 2 MEMBER 4"/>
    <property type="match status" value="1"/>
</dbReference>
<dbReference type="Pfam" id="PF05296">
    <property type="entry name" value="TAS2R"/>
    <property type="match status" value="1"/>
</dbReference>
<dbReference type="SUPFAM" id="SSF81321">
    <property type="entry name" value="Family A G protein-coupled receptor-like"/>
    <property type="match status" value="1"/>
</dbReference>
<evidence type="ECO:0000250" key="1"/>
<evidence type="ECO:0000250" key="2">
    <source>
        <dbReference type="UniProtKB" id="Q9JKT3"/>
    </source>
</evidence>
<evidence type="ECO:0000255" key="3"/>
<evidence type="ECO:0000269" key="4">
    <source>
    </source>
</evidence>
<evidence type="ECO:0000305" key="5"/>
<evidence type="ECO:0000312" key="6">
    <source>
        <dbReference type="EMBL" id="AAR13349.1"/>
    </source>
</evidence>
<evidence type="ECO:0000312" key="7">
    <source>
        <dbReference type="EMBL" id="AAX99133.1"/>
    </source>
</evidence>
<evidence type="ECO:0000312" key="8">
    <source>
        <dbReference type="RGD" id="1561194"/>
    </source>
</evidence>
<keyword id="KW-1003">Cell membrane</keyword>
<keyword id="KW-0966">Cell projection</keyword>
<keyword id="KW-0969">Cilium</keyword>
<keyword id="KW-0297">G-protein coupled receptor</keyword>
<keyword id="KW-0325">Glycoprotein</keyword>
<keyword id="KW-0472">Membrane</keyword>
<keyword id="KW-0675">Receptor</keyword>
<keyword id="KW-1185">Reference proteome</keyword>
<keyword id="KW-0716">Sensory transduction</keyword>
<keyword id="KW-0919">Taste</keyword>
<keyword id="KW-0807">Transducer</keyword>
<keyword id="KW-0812">Transmembrane</keyword>
<keyword id="KW-1133">Transmembrane helix</keyword>